<comment type="function">
    <text evidence="1">Co-chaperone that binds directly to HSC70 and HSP70 and regulates their ATPase activity.</text>
</comment>
<comment type="subunit">
    <text evidence="1">Homooligomerize.</text>
</comment>
<comment type="interaction">
    <interactant intactId="EBI-744081">
        <id>Q96EQ0</id>
    </interactant>
    <interactant intactId="EBI-8584118">
        <id>Q9H172</id>
        <label>ABCG4</label>
    </interactant>
    <organismsDiffer>false</organismsDiffer>
    <experiments>3</experiments>
</comment>
<comment type="interaction">
    <interactant intactId="EBI-744081">
        <id>Q96EQ0</id>
    </interactant>
    <interactant intactId="EBI-2809203">
        <id>Q7Z6V5</id>
        <label>ADAT2</label>
    </interactant>
    <organismsDiffer>false</organismsDiffer>
    <experiments>3</experiments>
</comment>
<comment type="interaction">
    <interactant intactId="EBI-744081">
        <id>Q96EQ0</id>
    </interactant>
    <interactant intactId="EBI-10827839">
        <id>Q15848</id>
        <label>ADIPOQ</label>
    </interactant>
    <organismsDiffer>false</organismsDiffer>
    <experiments>3</experiments>
</comment>
<comment type="interaction">
    <interactant intactId="EBI-744081">
        <id>Q96EQ0</id>
    </interactant>
    <interactant intactId="EBI-712648">
        <id>O95994</id>
        <label>AGR2</label>
    </interactant>
    <organismsDiffer>false</organismsDiffer>
    <experiments>6</experiments>
</comment>
<comment type="interaction">
    <interactant intactId="EBI-744081">
        <id>Q96EQ0</id>
    </interactant>
    <interactant intactId="EBI-3925742">
        <id>Q8TD06</id>
        <label>AGR3</label>
    </interactant>
    <organismsDiffer>false</organismsDiffer>
    <experiments>8</experiments>
</comment>
<comment type="interaction">
    <interactant intactId="EBI-744081">
        <id>Q96EQ0</id>
    </interactant>
    <interactant intactId="EBI-12092171">
        <id>Q12797-6</id>
        <label>ASPH</label>
    </interactant>
    <organismsDiffer>false</organismsDiffer>
    <experiments>3</experiments>
</comment>
<comment type="interaction">
    <interactant intactId="EBI-744081">
        <id>Q96EQ0</id>
    </interactant>
    <interactant intactId="EBI-6590057">
        <id>P35070</id>
        <label>BTC</label>
    </interactant>
    <organismsDiffer>false</organismsDiffer>
    <experiments>3</experiments>
</comment>
<comment type="interaction">
    <interactant intactId="EBI-744081">
        <id>Q96EQ0</id>
    </interactant>
    <interactant intactId="EBI-1220209">
        <id>P02745</id>
        <label>C1QA</label>
    </interactant>
    <organismsDiffer>false</organismsDiffer>
    <experiments>3</experiments>
</comment>
<comment type="interaction">
    <interactant intactId="EBI-744081">
        <id>Q96EQ0</id>
    </interactant>
    <interactant intactId="EBI-12062109">
        <id>Q86Z23</id>
        <label>C1QL4</label>
    </interactant>
    <organismsDiffer>false</organismsDiffer>
    <experiments>3</experiments>
</comment>
<comment type="interaction">
    <interactant intactId="EBI-744081">
        <id>Q96EQ0</id>
    </interactant>
    <interactant intactId="EBI-19947914">
        <id>Q9BXJ0</id>
        <label>C1QTNF5</label>
    </interactant>
    <organismsDiffer>false</organismsDiffer>
    <experiments>3</experiments>
</comment>
<comment type="interaction">
    <interactant intactId="EBI-744081">
        <id>Q96EQ0</id>
    </interactant>
    <interactant intactId="EBI-10301084">
        <id>Q9BXI9</id>
        <label>C1QTNF6</label>
    </interactant>
    <organismsDiffer>false</organismsDiffer>
    <experiments>3</experiments>
</comment>
<comment type="interaction">
    <interactant intactId="EBI-744081">
        <id>Q96EQ0</id>
    </interactant>
    <interactant intactId="EBI-11986083">
        <id>Q6UWT4</id>
        <label>C5orf46</label>
    </interactant>
    <organismsDiffer>false</organismsDiffer>
    <experiments>3</experiments>
</comment>
<comment type="interaction">
    <interactant intactId="EBI-744081">
        <id>Q96EQ0</id>
    </interactant>
    <interactant intactId="EBI-1049597">
        <id>P27797</id>
        <label>CALR</label>
    </interactant>
    <organismsDiffer>false</organismsDiffer>
    <experiments>3</experiments>
</comment>
<comment type="interaction">
    <interactant intactId="EBI-744081">
        <id>Q96EQ0</id>
    </interactant>
    <interactant intactId="EBI-12934095">
        <id>P16619</id>
        <label>CCL3L3</label>
    </interactant>
    <organismsDiffer>false</organismsDiffer>
    <experiments>3</experiments>
</comment>
<comment type="interaction">
    <interactant intactId="EBI-744081">
        <id>Q96EQ0</id>
    </interactant>
    <interactant intactId="EBI-12824513">
        <id>Q8TD46-4</id>
        <label>CD200R1</label>
    </interactant>
    <organismsDiffer>false</organismsDiffer>
    <experiments>3</experiments>
</comment>
<comment type="interaction">
    <interactant intactId="EBI-744081">
        <id>Q96EQ0</id>
    </interactant>
    <interactant intactId="EBI-3862416">
        <id>P04234</id>
        <label>CD3D</label>
    </interactant>
    <organismsDiffer>false</organismsDiffer>
    <experiments>3</experiments>
</comment>
<comment type="interaction">
    <interactant intactId="EBI-744081">
        <id>Q96EQ0</id>
    </interactant>
    <interactant intactId="EBI-2826276">
        <id>P34810</id>
        <label>CD68</label>
    </interactant>
    <organismsDiffer>false</organismsDiffer>
    <experiments>3</experiments>
</comment>
<comment type="interaction">
    <interactant intactId="EBI-744081">
        <id>Q96EQ0</id>
    </interactant>
    <interactant intactId="EBI-2873732">
        <id>P40259</id>
        <label>CD79B</label>
    </interactant>
    <organismsDiffer>false</organismsDiffer>
    <experiments>3</experiments>
</comment>
<comment type="interaction">
    <interactant intactId="EBI-744081">
        <id>Q96EQ0</id>
    </interactant>
    <interactant intactId="EBI-2824782">
        <id>Q8TCZ2</id>
        <label>CD99L2</label>
    </interactant>
    <organismsDiffer>false</organismsDiffer>
    <experiments>6</experiments>
</comment>
<comment type="interaction">
    <interactant intactId="EBI-744081">
        <id>Q96EQ0</id>
    </interactant>
    <interactant intactId="EBI-10215061">
        <id>P55291</id>
        <label>CDH15</label>
    </interactant>
    <organismsDiffer>false</organismsDiffer>
    <experiments>3</experiments>
</comment>
<comment type="interaction">
    <interactant intactId="EBI-744081">
        <id>Q96EQ0</id>
    </interactant>
    <interactant intactId="EBI-23373346">
        <id>P30085-3</id>
        <label>CMPK1</label>
    </interactant>
    <organismsDiffer>false</organismsDiffer>
    <experiments>3</experiments>
</comment>
<comment type="interaction">
    <interactant intactId="EBI-744081">
        <id>Q96EQ0</id>
    </interactant>
    <interactant intactId="EBI-2528309">
        <id>Q03692</id>
        <label>COL10A1</label>
    </interactant>
    <organismsDiffer>false</organismsDiffer>
    <experiments>3</experiments>
</comment>
<comment type="interaction">
    <interactant intactId="EBI-744081">
        <id>Q96EQ0</id>
    </interactant>
    <interactant intactId="EBI-16431143">
        <id>A0A0S2Z3K0</id>
        <label>COL1A2</label>
    </interactant>
    <organismsDiffer>false</organismsDiffer>
    <experiments>3</experiments>
</comment>
<comment type="interaction">
    <interactant intactId="EBI-744081">
        <id>Q96EQ0</id>
    </interactant>
    <interactant intactId="EBI-983038">
        <id>P08123</id>
        <label>COL1A2</label>
    </interactant>
    <organismsDiffer>false</organismsDiffer>
    <experiments>3</experiments>
</comment>
<comment type="interaction">
    <interactant intactId="EBI-744081">
        <id>Q96EQ0</id>
    </interactant>
    <interactant intactId="EBI-1637847">
        <id>Q9Y215</id>
        <label>COLQ</label>
    </interactant>
    <organismsDiffer>false</organismsDiffer>
    <experiments>3</experiments>
</comment>
<comment type="interaction">
    <interactant intactId="EBI-744081">
        <id>Q96EQ0</id>
    </interactant>
    <interactant intactId="EBI-2531022">
        <id>P49747</id>
        <label>COMP</label>
    </interactant>
    <organismsDiffer>false</organismsDiffer>
    <experiments>3</experiments>
</comment>
<comment type="interaction">
    <interactant intactId="EBI-744081">
        <id>Q96EQ0</id>
    </interactant>
    <interactant intactId="EBI-852194">
        <id>Q68CJ9</id>
        <label>CREB3L3</label>
    </interactant>
    <organismsDiffer>false</organismsDiffer>
    <experiments>3</experiments>
</comment>
<comment type="interaction">
    <interactant intactId="EBI-744081">
        <id>Q96EQ0</id>
    </interactant>
    <interactant intactId="EBI-13375302">
        <id>P0DML2</id>
        <label>CSH1</label>
    </interactant>
    <organismsDiffer>false</organismsDiffer>
    <experiments>3</experiments>
</comment>
<comment type="interaction">
    <interactant intactId="EBI-744081">
        <id>Q96EQ0</id>
    </interactant>
    <interactant intactId="EBI-12167441">
        <id>P0DML3</id>
        <label>CSH2</label>
    </interactant>
    <organismsDiffer>false</organismsDiffer>
    <experiments>3</experiments>
</comment>
<comment type="interaction">
    <interactant intactId="EBI-744081">
        <id>Q96EQ0</id>
    </interactant>
    <interactant intactId="EBI-1188472">
        <id>P78358</id>
        <label>CTAG1B</label>
    </interactant>
    <organismsDiffer>false</organismsDiffer>
    <experiments>3</experiments>
</comment>
<comment type="interaction">
    <interactant intactId="EBI-744081">
        <id>Q96EQ0</id>
    </interactant>
    <interactant intactId="EBI-953870">
        <id>Q9UHQ9</id>
        <label>CYB5R1</label>
    </interactant>
    <organismsDiffer>false</organismsDiffer>
    <experiments>3</experiments>
</comment>
<comment type="interaction">
    <interactant intactId="EBI-744081">
        <id>Q96EQ0</id>
    </interactant>
    <interactant intactId="EBI-10222451">
        <id>Q01524</id>
        <label>DEFA6</label>
    </interactant>
    <organismsDiffer>false</organismsDiffer>
    <experiments>3</experiments>
</comment>
<comment type="interaction">
    <interactant intactId="EBI-744081">
        <id>Q96EQ0</id>
    </interactant>
    <interactant intactId="EBI-724515">
        <id>O95424</id>
        <label>DEXI</label>
    </interactant>
    <organismsDiffer>false</organismsDiffer>
    <experiments>3</experiments>
</comment>
<comment type="interaction">
    <interactant intactId="EBI-744081">
        <id>Q96EQ0</id>
    </interactant>
    <interactant intactId="EBI-7943171">
        <id>Q6E0U4</id>
        <label>DMKN</label>
    </interactant>
    <organismsDiffer>false</organismsDiffer>
    <experiments>3</experiments>
</comment>
<comment type="interaction">
    <interactant intactId="EBI-744081">
        <id>Q96EQ0</id>
    </interactant>
    <interactant intactId="EBI-947964">
        <id>Q16610</id>
        <label>ECM1</label>
    </interactant>
    <organismsDiffer>false</organismsDiffer>
    <experiments>3</experiments>
</comment>
<comment type="interaction">
    <interactant intactId="EBI-744081">
        <id>Q96EQ0</id>
    </interactant>
    <interactant intactId="EBI-743414">
        <id>O95967</id>
        <label>EFEMP2</label>
    </interactant>
    <organismsDiffer>false</organismsDiffer>
    <experiments>8</experiments>
</comment>
<comment type="interaction">
    <interactant intactId="EBI-744081">
        <id>Q96EQ0</id>
    </interactant>
    <interactant intactId="EBI-12164849">
        <id>Q9ULC0-2</id>
        <label>EMCN</label>
    </interactant>
    <organismsDiffer>false</organismsDiffer>
    <experiments>5</experiments>
</comment>
<comment type="interaction">
    <interactant intactId="EBI-744081">
        <id>Q96EQ0</id>
    </interactant>
    <interactant intactId="EBI-946830">
        <id>P30040</id>
        <label>ERP29</label>
    </interactant>
    <organismsDiffer>false</organismsDiffer>
    <experiments>6</experiments>
</comment>
<comment type="interaction">
    <interactant intactId="EBI-744081">
        <id>Q96EQ0</id>
    </interactant>
    <interactant intactId="EBI-2834493">
        <id>Q9HBU6</id>
        <label>ETNK1</label>
    </interactant>
    <organismsDiffer>false</organismsDiffer>
    <experiments>3</experiments>
</comment>
<comment type="interaction">
    <interactant intactId="EBI-744081">
        <id>Q96EQ0</id>
    </interactant>
    <interactant intactId="EBI-715362">
        <id>Q9H8M9</id>
        <label>EVA1A</label>
    </interactant>
    <organismsDiffer>false</organismsDiffer>
    <experiments>3</experiments>
</comment>
<comment type="interaction">
    <interactant intactId="EBI-744081">
        <id>Q96EQ0</id>
    </interactant>
    <interactant intactId="EBI-2505934">
        <id>P35555</id>
        <label>FBN1</label>
    </interactant>
    <organismsDiffer>false</organismsDiffer>
    <experiments>3</experiments>
</comment>
<comment type="interaction">
    <interactant intactId="EBI-744081">
        <id>Q96EQ0</id>
    </interactant>
    <interactant intactId="EBI-3909329">
        <id>Q9NSA1</id>
        <label>FGF21</label>
    </interactant>
    <organismsDiffer>false</organismsDiffer>
    <experiments>3</experiments>
</comment>
<comment type="interaction">
    <interactant intactId="EBI-744081">
        <id>Q96EQ0</id>
    </interactant>
    <interactant intactId="EBI-746917">
        <id>O75084</id>
        <label>FZD7</label>
    </interactant>
    <organismsDiffer>false</organismsDiffer>
    <experiments>3</experiments>
</comment>
<comment type="interaction">
    <interactant intactId="EBI-744081">
        <id>Q96EQ0</id>
    </interactant>
    <interactant intactId="EBI-13364322">
        <id>Q8NCW6-2</id>
        <label>GALNT11</label>
    </interactant>
    <organismsDiffer>false</organismsDiffer>
    <experiments>3</experiments>
</comment>
<comment type="interaction">
    <interactant intactId="EBI-744081">
        <id>Q96EQ0</id>
    </interactant>
    <interactant intactId="EBI-3045534">
        <id>Q92820</id>
        <label>GGH</label>
    </interactant>
    <organismsDiffer>false</organismsDiffer>
    <experiments>3</experiments>
</comment>
<comment type="interaction">
    <interactant intactId="EBI-744081">
        <id>Q96EQ0</id>
    </interactant>
    <interactant intactId="EBI-8588553">
        <id>P09681</id>
        <label>GIP</label>
    </interactant>
    <organismsDiffer>false</organismsDiffer>
    <experiments>3</experiments>
</comment>
<comment type="interaction">
    <interactant intactId="EBI-744081">
        <id>Q96EQ0</id>
    </interactant>
    <interactant intactId="EBI-749411">
        <id>Q96SL4</id>
        <label>GPX7</label>
    </interactant>
    <organismsDiffer>false</organismsDiffer>
    <experiments>5</experiments>
</comment>
<comment type="interaction">
    <interactant intactId="EBI-744081">
        <id>Q96EQ0</id>
    </interactant>
    <interactant intactId="EBI-702665">
        <id>P02724</id>
        <label>GYPA</label>
    </interactant>
    <organismsDiffer>false</organismsDiffer>
    <experiments>3</experiments>
</comment>
<comment type="interaction">
    <interactant intactId="EBI-744081">
        <id>Q96EQ0</id>
    </interactant>
    <interactant intactId="EBI-12885352">
        <id>Q96GW1</id>
        <label>HSP90B1</label>
    </interactant>
    <organismsDiffer>false</organismsDiffer>
    <experiments>3</experiments>
</comment>
<comment type="interaction">
    <interactant intactId="EBI-744081">
        <id>Q96EQ0</id>
    </interactant>
    <interactant intactId="EBI-750892">
        <id>P48723</id>
        <label>HSPA13</label>
    </interactant>
    <organismsDiffer>false</organismsDiffer>
    <experiments>6</experiments>
</comment>
<comment type="interaction">
    <interactant intactId="EBI-744081">
        <id>Q96EQ0</id>
    </interactant>
    <interactant intactId="EBI-299383">
        <id>P08887</id>
        <label>IL6R</label>
    </interactant>
    <organismsDiffer>false</organismsDiffer>
    <experiments>3</experiments>
</comment>
<comment type="interaction">
    <interactant intactId="EBI-744081">
        <id>Q96EQ0</id>
    </interactant>
    <interactant intactId="EBI-1030834">
        <id>P40189</id>
        <label>IL6ST</label>
    </interactant>
    <organismsDiffer>false</organismsDiffer>
    <experiments>4</experiments>
</comment>
<comment type="interaction">
    <interactant intactId="EBI-744081">
        <id>Q96EQ0</id>
    </interactant>
    <interactant intactId="EBI-10238517">
        <id>Q17RA0</id>
        <label>IL6ST</label>
    </interactant>
    <organismsDiffer>false</organismsDiffer>
    <experiments>3</experiments>
</comment>
<comment type="interaction">
    <interactant intactId="EBI-744081">
        <id>Q96EQ0</id>
    </interactant>
    <interactant intactId="EBI-2556412">
        <id>Q8IWB1</id>
        <label>ITPRIP</label>
    </interactant>
    <organismsDiffer>false</organismsDiffer>
    <experiments>3</experiments>
</comment>
<comment type="interaction">
    <interactant intactId="EBI-744081">
        <id>Q96EQ0</id>
    </interactant>
    <interactant intactId="EBI-12337095">
        <id>Q6GPH6-2</id>
        <label>ITPRIPL1</label>
    </interactant>
    <organismsDiffer>false</organismsDiffer>
    <experiments>3</experiments>
</comment>
<comment type="interaction">
    <interactant intactId="EBI-744081">
        <id>Q96EQ0</id>
    </interactant>
    <interactant intactId="EBI-11981259">
        <id>Q9UJ90</id>
        <label>KCNE5</label>
    </interactant>
    <organismsDiffer>false</organismsDiffer>
    <experiments>3</experiments>
</comment>
<comment type="interaction">
    <interactant intactId="EBI-744081">
        <id>Q96EQ0</id>
    </interactant>
    <interactant intactId="EBI-298429">
        <id>P04264</id>
        <label>KRT1</label>
    </interactant>
    <organismsDiffer>false</organismsDiffer>
    <experiments>3</experiments>
</comment>
<comment type="interaction">
    <interactant intactId="EBI-744081">
        <id>Q96EQ0</id>
    </interactant>
    <interactant intactId="EBI-8070286">
        <id>O43561-2</id>
        <label>LAT</label>
    </interactant>
    <organismsDiffer>false</organismsDiffer>
    <experiments>3</experiments>
</comment>
<comment type="interaction">
    <interactant intactId="EBI-744081">
        <id>Q96EQ0</id>
    </interactant>
    <interactant intactId="EBI-11911016">
        <id>P80188</id>
        <label>LCN2</label>
    </interactant>
    <organismsDiffer>false</organismsDiffer>
    <experiments>3</experiments>
</comment>
<comment type="interaction">
    <interactant intactId="EBI-744081">
        <id>Q96EQ0</id>
    </interactant>
    <interactant intactId="EBI-11659791">
        <id>P01229</id>
        <label>LHB</label>
    </interactant>
    <organismsDiffer>false</organismsDiffer>
    <experiments>3</experiments>
</comment>
<comment type="interaction">
    <interactant intactId="EBI-744081">
        <id>Q96EQ0</id>
    </interactant>
    <interactant intactId="EBI-11959475">
        <id>P25791-3</id>
        <label>LMO2</label>
    </interactant>
    <organismsDiffer>false</organismsDiffer>
    <experiments>3</experiments>
</comment>
<comment type="interaction">
    <interactant intactId="EBI-744081">
        <id>Q96EQ0</id>
    </interactant>
    <interactant intactId="EBI-718622">
        <id>Q969H8</id>
        <label>MYDGF</label>
    </interactant>
    <organismsDiffer>false</organismsDiffer>
    <experiments>3</experiments>
</comment>
<comment type="interaction">
    <interactant intactId="EBI-744081">
        <id>Q96EQ0</id>
    </interactant>
    <interactant intactId="EBI-8650724">
        <id>Q8IW45</id>
        <label>NAXD</label>
    </interactant>
    <organismsDiffer>false</organismsDiffer>
    <experiments>3</experiments>
</comment>
<comment type="interaction">
    <interactant intactId="EBI-744081">
        <id>Q96EQ0</id>
    </interactant>
    <interactant intactId="EBI-713684">
        <id>Q13232</id>
        <label>NME3</label>
    </interactant>
    <organismsDiffer>false</organismsDiffer>
    <experiments>5</experiments>
</comment>
<comment type="interaction">
    <interactant intactId="EBI-744081">
        <id>Q96EQ0</id>
    </interactant>
    <interactant intactId="EBI-2804080">
        <id>Q99650</id>
        <label>OSMR</label>
    </interactant>
    <organismsDiffer>false</organismsDiffer>
    <experiments>3</experiments>
</comment>
<comment type="interaction">
    <interactant intactId="EBI-744081">
        <id>Q96EQ0</id>
    </interactant>
    <interactant intactId="EBI-10244544">
        <id>Q5JUK9</id>
        <label>PAGE3</label>
    </interactant>
    <organismsDiffer>false</organismsDiffer>
    <experiments>3</experiments>
</comment>
<comment type="interaction">
    <interactant intactId="EBI-744081">
        <id>Q96EQ0</id>
    </interactant>
    <interactant intactId="EBI-1043087">
        <id>Q15084</id>
        <label>PDIA6</label>
    </interactant>
    <organismsDiffer>false</organismsDiffer>
    <experiments>3</experiments>
</comment>
<comment type="interaction">
    <interactant intactId="EBI-744081">
        <id>Q96EQ0</id>
    </interactant>
    <interactant intactId="EBI-1045534">
        <id>O00264</id>
        <label>PGRMC1</label>
    </interactant>
    <organismsDiffer>false</organismsDiffer>
    <experiments>3</experiments>
</comment>
<comment type="interaction">
    <interactant intactId="EBI-744081">
        <id>Q96EQ0</id>
    </interactant>
    <interactant intactId="EBI-12407415">
        <id>O00592-2</id>
        <label>PODXL</label>
    </interactant>
    <organismsDiffer>false</organismsDiffer>
    <experiments>3</experiments>
</comment>
<comment type="interaction">
    <interactant intactId="EBI-744081">
        <id>Q96EQ0</id>
    </interactant>
    <interactant intactId="EBI-359252">
        <id>P23284</id>
        <label>PPIB</label>
    </interactant>
    <organismsDiffer>false</organismsDiffer>
    <experiments>4</experiments>
</comment>
<comment type="interaction">
    <interactant intactId="EBI-744081">
        <id>Q96EQ0</id>
    </interactant>
    <interactant intactId="EBI-953909">
        <id>P45877</id>
        <label>PPIC</label>
    </interactant>
    <organismsDiffer>false</organismsDiffer>
    <experiments>3</experiments>
</comment>
<comment type="interaction">
    <interactant intactId="EBI-744081">
        <id>Q96EQ0</id>
    </interactant>
    <interactant intactId="EBI-2116102">
        <id>Q96NZ9</id>
        <label>PRAP1</label>
    </interactant>
    <organismsDiffer>false</organismsDiffer>
    <experiments>3</experiments>
</comment>
<comment type="interaction">
    <interactant intactId="EBI-744081">
        <id>Q96EQ0</id>
    </interactant>
    <interactant intactId="EBI-10173935">
        <id>A5D903</id>
        <label>PRB1</label>
    </interactant>
    <organismsDiffer>false</organismsDiffer>
    <experiments>3</experiments>
</comment>
<comment type="interaction">
    <interactant intactId="EBI-744081">
        <id>Q96EQ0</id>
    </interactant>
    <interactant intactId="EBI-13360404">
        <id>Q04118</id>
        <label>PRB3</label>
    </interactant>
    <organismsDiffer>false</organismsDiffer>
    <experiments>3</experiments>
</comment>
<comment type="interaction">
    <interactant intactId="EBI-744081">
        <id>Q96EQ0</id>
    </interactant>
    <interactant intactId="EBI-738624">
        <id>Q16378</id>
        <label>PRR4</label>
    </interactant>
    <organismsDiffer>false</organismsDiffer>
    <experiments>3</experiments>
</comment>
<comment type="interaction">
    <interactant intactId="EBI-744081">
        <id>Q96EQ0</id>
    </interactant>
    <interactant intactId="EBI-11974061">
        <id>Q9UIG4</id>
        <label>PSORS1C2</label>
    </interactant>
    <organismsDiffer>false</organismsDiffer>
    <experiments>3</experiments>
</comment>
<comment type="interaction">
    <interactant intactId="EBI-744081">
        <id>Q96EQ0</id>
    </interactant>
    <interactant intactId="EBI-746228">
        <id>Q9Y5P3</id>
        <label>RAI2</label>
    </interactant>
    <organismsDiffer>false</organismsDiffer>
    <experiments>5</experiments>
</comment>
<comment type="interaction">
    <interactant intactId="EBI-744081">
        <id>Q96EQ0</id>
    </interactant>
    <interactant intactId="EBI-948278">
        <id>Q15293</id>
        <label>RCN1</label>
    </interactant>
    <organismsDiffer>false</organismsDiffer>
    <experiments>3</experiments>
</comment>
<comment type="interaction">
    <interactant intactId="EBI-744081">
        <id>Q96EQ0</id>
    </interactant>
    <interactant intactId="EBI-12423312">
        <id>Q5GAN6</id>
        <label>RNASE10</label>
    </interactant>
    <organismsDiffer>false</organismsDiffer>
    <experiments>3</experiments>
</comment>
<comment type="interaction">
    <interactant intactId="EBI-744081">
        <id>Q96EQ0</id>
    </interactant>
    <interactant intactId="EBI-2340657">
        <id>P50876</id>
        <label>RNF144A</label>
    </interactant>
    <organismsDiffer>false</organismsDiffer>
    <experiments>3</experiments>
</comment>
<comment type="interaction">
    <interactant intactId="EBI-744081">
        <id>Q96EQ0</id>
    </interactant>
    <interactant intactId="EBI-12055631">
        <id>Q96K19-5</id>
        <label>RNF170</label>
    </interactant>
    <organismsDiffer>false</organismsDiffer>
    <experiments>3</experiments>
</comment>
<comment type="interaction">
    <interactant intactId="EBI-744081">
        <id>Q96EQ0</id>
    </interactant>
    <interactant intactId="EBI-3913237">
        <id>P31431</id>
        <label>SDC4</label>
    </interactant>
    <organismsDiffer>false</organismsDiffer>
    <experiments>3</experiments>
</comment>
<comment type="interaction">
    <interactant intactId="EBI-744081">
        <id>Q96EQ0</id>
    </interactant>
    <interactant intactId="EBI-2339921">
        <id>Q9HCN8</id>
        <label>SDF2L1</label>
    </interactant>
    <organismsDiffer>false</organismsDiffer>
    <experiments>3</experiments>
</comment>
<comment type="interaction">
    <interactant intactId="EBI-744081">
        <id>Q96EQ0</id>
    </interactant>
    <interactant intactId="EBI-10277687">
        <id>Q8WWX9</id>
        <label>SELENOM</label>
    </interactant>
    <organismsDiffer>false</organismsDiffer>
    <experiments>5</experiments>
</comment>
<comment type="interaction">
    <interactant intactId="EBI-744081">
        <id>Q96EQ0</id>
    </interactant>
    <interactant intactId="EBI-953978">
        <id>P05121</id>
        <label>SERPINE1</label>
    </interactant>
    <organismsDiffer>false</organismsDiffer>
    <experiments>6</experiments>
</comment>
<comment type="interaction">
    <interactant intactId="EBI-744081">
        <id>Q96EQ0</id>
    </interactant>
    <interactant intactId="EBI-2932733">
        <id>P36955</id>
        <label>SERPINF1</label>
    </interactant>
    <organismsDiffer>false</organismsDiffer>
    <experiments>3</experiments>
</comment>
<comment type="interaction">
    <interactant intactId="EBI-744081">
        <id>Q96EQ0</id>
    </interactant>
    <interactant intactId="EBI-750144">
        <id>O75830</id>
        <label>SERPINI2</label>
    </interactant>
    <organismsDiffer>false</organismsDiffer>
    <experiments>4</experiments>
</comment>
<comment type="interaction">
    <interactant intactId="EBI-744081">
        <id>Q96EQ0</id>
    </interactant>
    <interactant intactId="EBI-5663553">
        <id>Q16586</id>
        <label>SGCA</label>
    </interactant>
    <organismsDiffer>false</organismsDiffer>
    <experiments>3</experiments>
</comment>
<comment type="interaction">
    <interactant intactId="EBI-744081">
        <id>Q96EQ0</id>
    </interactant>
    <interactant intactId="EBI-347996">
        <id>O43765</id>
        <label>SGTA</label>
    </interactant>
    <organismsDiffer>false</organismsDiffer>
    <experiments>3</experiments>
</comment>
<comment type="interaction">
    <interactant intactId="EBI-744081">
        <id>Q96EQ0</id>
    </interactant>
    <interactant intactId="EBI-13369834">
        <id>Q8N114-3</id>
        <label>SHISA5</label>
    </interactant>
    <organismsDiffer>false</organismsDiffer>
    <experiments>3</experiments>
</comment>
<comment type="interaction">
    <interactant intactId="EBI-744081">
        <id>Q96EQ0</id>
    </interactant>
    <interactant intactId="EBI-2840325">
        <id>Q9H173</id>
        <label>SIL1</label>
    </interactant>
    <organismsDiffer>false</organismsDiffer>
    <experiments>3</experiments>
</comment>
<comment type="interaction">
    <interactant intactId="EBI-744081">
        <id>Q96EQ0</id>
    </interactant>
    <interactant intactId="EBI-355293">
        <id>P03973</id>
        <label>SLPI</label>
    </interactant>
    <organismsDiffer>false</organismsDiffer>
    <experiments>3</experiments>
</comment>
<comment type="interaction">
    <interactant intactId="EBI-744081">
        <id>Q96EQ0</id>
    </interactant>
    <interactant intactId="EBI-10195782">
        <id>P08294</id>
        <label>SOD3</label>
    </interactant>
    <organismsDiffer>false</organismsDiffer>
    <experiments>3</experiments>
</comment>
<comment type="interaction">
    <interactant intactId="EBI-744081">
        <id>Q96EQ0</id>
    </interactant>
    <interactant intactId="EBI-13336697">
        <id>O60575</id>
        <label>SPINK4</label>
    </interactant>
    <organismsDiffer>false</organismsDiffer>
    <experiments>3</experiments>
</comment>
<comment type="interaction">
    <interactant intactId="EBI-744081">
        <id>Q96EQ0</id>
    </interactant>
    <interactant intactId="EBI-723648">
        <id>P10451</id>
        <label>SPP1</label>
    </interactant>
    <organismsDiffer>false</organismsDiffer>
    <experiments>3</experiments>
</comment>
<comment type="interaction">
    <interactant intactId="EBI-744081">
        <id>Q96EQ0</id>
    </interactant>
    <interactant intactId="EBI-744915">
        <id>P10124</id>
        <label>SRGN</label>
    </interactant>
    <organismsDiffer>false</organismsDiffer>
    <experiments>3</experiments>
</comment>
<comment type="interaction">
    <interactant intactId="EBI-744081">
        <id>Q96EQ0</id>
    </interactant>
    <interactant intactId="EBI-751770">
        <id>Q9BT88</id>
        <label>SYT11</label>
    </interactant>
    <organismsDiffer>false</organismsDiffer>
    <experiments>3</experiments>
</comment>
<comment type="interaction">
    <interactant intactId="EBI-744081">
        <id>Q96EQ0</id>
    </interactant>
    <interactant intactId="EBI-751132">
        <id>Q9H2B2</id>
        <label>SYT4</label>
    </interactant>
    <organismsDiffer>false</organismsDiffer>
    <experiments>3</experiments>
</comment>
<comment type="interaction">
    <interactant intactId="EBI-744081">
        <id>Q96EQ0</id>
    </interactant>
    <interactant intactId="EBI-743871">
        <id>P04155</id>
        <label>TFF1</label>
    </interactant>
    <organismsDiffer>false</organismsDiffer>
    <experiments>5</experiments>
</comment>
<comment type="interaction">
    <interactant intactId="EBI-744081">
        <id>Q96EQ0</id>
    </interactant>
    <interactant intactId="EBI-7100456">
        <id>Q6UXF1</id>
        <label>TMEM108</label>
    </interactant>
    <organismsDiffer>false</organismsDiffer>
    <experiments>3</experiments>
</comment>
<comment type="interaction">
    <interactant intactId="EBI-744081">
        <id>Q96EQ0</id>
    </interactant>
    <interactant intactId="EBI-749248">
        <id>Q8N131</id>
        <label>TMEM123</label>
    </interactant>
    <organismsDiffer>false</organismsDiffer>
    <experiments>3</experiments>
</comment>
<comment type="interaction">
    <interactant intactId="EBI-744081">
        <id>Q96EQ0</id>
    </interactant>
    <interactant intactId="EBI-11425701">
        <id>Q9BVT8</id>
        <label>TMUB1</label>
    </interactant>
    <organismsDiffer>false</organismsDiffer>
    <experiments>3</experiments>
</comment>
<comment type="interaction">
    <interactant intactId="EBI-744081">
        <id>Q96EQ0</id>
    </interactant>
    <interactant intactId="EBI-12089038">
        <id>Q9NS68-2</id>
        <label>TNFRSF19</label>
    </interactant>
    <organismsDiffer>false</organismsDiffer>
    <experiments>3</experiments>
</comment>
<comment type="interaction">
    <interactant intactId="EBI-744081">
        <id>Q96EQ0</id>
    </interactant>
    <interactant intactId="EBI-12856452">
        <id>O75888-3</id>
        <label>TNFSF13</label>
    </interactant>
    <organismsDiffer>false</organismsDiffer>
    <experiments>3</experiments>
</comment>
<comment type="interaction">
    <interactant intactId="EBI-744081">
        <id>Q96EQ0</id>
    </interactant>
    <interactant intactId="EBI-2564581">
        <id>O95881</id>
        <label>TXNDC12</label>
    </interactant>
    <organismsDiffer>false</organismsDiffer>
    <experiments>6</experiments>
</comment>
<comment type="interaction">
    <interactant intactId="EBI-744081">
        <id>Q96EQ0</id>
    </interactant>
    <interactant intactId="EBI-356983">
        <id>P11441</id>
        <label>UBL4A</label>
    </interactant>
    <organismsDiffer>false</organismsDiffer>
    <experiments>4</experiments>
</comment>
<comment type="interaction">
    <interactant intactId="EBI-744081">
        <id>Q96EQ0</id>
    </interactant>
    <interactant intactId="EBI-10188907">
        <id>O75631</id>
        <label>UPK3A</label>
    </interactant>
    <organismsDiffer>false</organismsDiffer>
    <experiments>3</experiments>
</comment>
<comment type="interaction">
    <interactant intactId="EBI-744081">
        <id>Q96EQ0</id>
    </interactant>
    <interactant intactId="EBI-3405539">
        <id>P49767</id>
        <label>VEGFC</label>
    </interactant>
    <organismsDiffer>false</organismsDiffer>
    <experiments>3</experiments>
</comment>
<comment type="interaction">
    <interactant intactId="EBI-744081">
        <id>Q96EQ0</id>
    </interactant>
    <interactant intactId="EBI-11957238">
        <id>Q2TAL6</id>
        <label>VWC2</label>
    </interactant>
    <organismsDiffer>false</organismsDiffer>
    <experiments>3</experiments>
</comment>
<comment type="interaction">
    <interactant intactId="EBI-744081">
        <id>Q96EQ0</id>
    </interactant>
    <interactant intactId="EBI-11958577">
        <id>Q8WWY7</id>
        <label>WFDC12</label>
    </interactant>
    <organismsDiffer>false</organismsDiffer>
    <experiments>3</experiments>
</comment>
<comment type="interaction">
    <interactant intactId="EBI-744081">
        <id>Q96EQ0</id>
    </interactant>
    <interactant intactId="EBI-746479">
        <id>O60844</id>
        <label>ZG16</label>
    </interactant>
    <organismsDiffer>false</organismsDiffer>
    <experiments>5</experiments>
</comment>
<comment type="interaction">
    <interactant intactId="EBI-744081">
        <id>Q96EQ0</id>
    </interactant>
    <interactant intactId="EBI-953824">
        <id>Q96DA0</id>
        <label>ZG16B</label>
    </interactant>
    <organismsDiffer>false</organismsDiffer>
    <experiments>5</experiments>
</comment>
<comment type="interaction">
    <interactant intactId="EBI-744081">
        <id>Q96EQ0</id>
    </interactant>
    <interactant intactId="EBI-17234977">
        <id>A0A1U9X8X8</id>
    </interactant>
    <organismsDiffer>false</organismsDiffer>
    <experiments>3</experiments>
</comment>
<comment type="similarity">
    <text evidence="3">Belongs to the SGT family.</text>
</comment>
<organism>
    <name type="scientific">Homo sapiens</name>
    <name type="common">Human</name>
    <dbReference type="NCBI Taxonomy" id="9606"/>
    <lineage>
        <taxon>Eukaryota</taxon>
        <taxon>Metazoa</taxon>
        <taxon>Chordata</taxon>
        <taxon>Craniata</taxon>
        <taxon>Vertebrata</taxon>
        <taxon>Euteleostomi</taxon>
        <taxon>Mammalia</taxon>
        <taxon>Eutheria</taxon>
        <taxon>Euarchontoglires</taxon>
        <taxon>Primates</taxon>
        <taxon>Haplorrhini</taxon>
        <taxon>Catarrhini</taxon>
        <taxon>Hominidae</taxon>
        <taxon>Homo</taxon>
    </lineage>
</organism>
<accession>Q96EQ0</accession>
<feature type="chain" id="PRO_0000106368" description="Small glutamine-rich tetratricopeptide repeat-containing protein beta">
    <location>
        <begin position="1"/>
        <end position="304"/>
    </location>
</feature>
<feature type="repeat" description="TPR 1">
    <location>
        <begin position="15"/>
        <end position="49"/>
    </location>
</feature>
<feature type="repeat" description="TPR 2">
    <location>
        <begin position="85"/>
        <end position="118"/>
    </location>
</feature>
<feature type="repeat" description="TPR 3">
    <location>
        <begin position="119"/>
        <end position="152"/>
    </location>
</feature>
<feature type="repeat" description="TPR 4">
    <location>
        <begin position="153"/>
        <end position="186"/>
    </location>
</feature>
<feature type="modified residue" description="N6-acetyllysine" evidence="2">
    <location>
        <position position="131"/>
    </location>
</feature>
<feature type="modified residue" description="Phosphoserine" evidence="2">
    <location>
        <position position="293"/>
    </location>
</feature>
<feature type="modified residue" description="Phosphoserine" evidence="4">
    <location>
        <position position="295"/>
    </location>
</feature>
<feature type="modified residue" description="Phosphoserine" evidence="4 5 6">
    <location>
        <position position="297"/>
    </location>
</feature>
<gene>
    <name type="primary">SGTB</name>
    <name type="synonym">SGT2</name>
</gene>
<proteinExistence type="evidence at protein level"/>
<evidence type="ECO:0000250" key="1"/>
<evidence type="ECO:0000250" key="2">
    <source>
        <dbReference type="UniProtKB" id="O43765"/>
    </source>
</evidence>
<evidence type="ECO:0000305" key="3"/>
<evidence type="ECO:0007744" key="4">
    <source>
    </source>
</evidence>
<evidence type="ECO:0007744" key="5">
    <source>
    </source>
</evidence>
<evidence type="ECO:0007744" key="6">
    <source>
    </source>
</evidence>
<protein>
    <recommendedName>
        <fullName>Small glutamine-rich tetratricopeptide repeat-containing protein beta</fullName>
    </recommendedName>
    <alternativeName>
        <fullName>Beta-SGT</fullName>
    </alternativeName>
    <alternativeName>
        <fullName>Small glutamine-rich protein with tetratricopeptide repeats 2</fullName>
    </alternativeName>
</protein>
<dbReference type="EMBL" id="AF368281">
    <property type="protein sequence ID" value="AAP29459.1"/>
    <property type="molecule type" value="mRNA"/>
</dbReference>
<dbReference type="EMBL" id="AK096321">
    <property type="protein sequence ID" value="BAC04761.1"/>
    <property type="molecule type" value="mRNA"/>
</dbReference>
<dbReference type="EMBL" id="BC012044">
    <property type="protein sequence ID" value="AAH12044.1"/>
    <property type="molecule type" value="mRNA"/>
</dbReference>
<dbReference type="CCDS" id="CCDS3988.1"/>
<dbReference type="RefSeq" id="NP_061945.1">
    <property type="nucleotide sequence ID" value="NM_019072.3"/>
</dbReference>
<dbReference type="RefSeq" id="XP_005248605.1">
    <property type="nucleotide sequence ID" value="XM_005248548.4"/>
</dbReference>
<dbReference type="RefSeq" id="XP_054208829.1">
    <property type="nucleotide sequence ID" value="XM_054352854.1"/>
</dbReference>
<dbReference type="SMR" id="Q96EQ0"/>
<dbReference type="BioGRID" id="120042">
    <property type="interactions" value="204"/>
</dbReference>
<dbReference type="FunCoup" id="Q96EQ0">
    <property type="interactions" value="593"/>
</dbReference>
<dbReference type="IntAct" id="Q96EQ0">
    <property type="interactions" value="195"/>
</dbReference>
<dbReference type="MINT" id="Q96EQ0"/>
<dbReference type="STRING" id="9606.ENSP00000370395"/>
<dbReference type="GlyGen" id="Q96EQ0">
    <property type="glycosylation" value="5 sites, 1 O-linked glycan (5 sites)"/>
</dbReference>
<dbReference type="iPTMnet" id="Q96EQ0"/>
<dbReference type="PhosphoSitePlus" id="Q96EQ0"/>
<dbReference type="BioMuta" id="SGTB"/>
<dbReference type="DMDM" id="41018109"/>
<dbReference type="jPOST" id="Q96EQ0"/>
<dbReference type="MassIVE" id="Q96EQ0"/>
<dbReference type="PaxDb" id="9606-ENSP00000370395"/>
<dbReference type="PeptideAtlas" id="Q96EQ0"/>
<dbReference type="ProteomicsDB" id="76440"/>
<dbReference type="Pumba" id="Q96EQ0"/>
<dbReference type="Antibodypedia" id="23800">
    <property type="antibodies" value="111 antibodies from 20 providers"/>
</dbReference>
<dbReference type="DNASU" id="54557"/>
<dbReference type="Ensembl" id="ENST00000381007.9">
    <property type="protein sequence ID" value="ENSP00000370395.4"/>
    <property type="gene ID" value="ENSG00000197860.10"/>
</dbReference>
<dbReference type="GeneID" id="54557"/>
<dbReference type="KEGG" id="hsa:54557"/>
<dbReference type="MANE-Select" id="ENST00000381007.9">
    <property type="protein sequence ID" value="ENSP00000370395.4"/>
    <property type="RefSeq nucleotide sequence ID" value="NM_019072.3"/>
    <property type="RefSeq protein sequence ID" value="NP_061945.1"/>
</dbReference>
<dbReference type="UCSC" id="uc003jud.4">
    <property type="organism name" value="human"/>
</dbReference>
<dbReference type="AGR" id="HGNC:23567"/>
<dbReference type="CTD" id="54557"/>
<dbReference type="DisGeNET" id="54557"/>
<dbReference type="GeneCards" id="SGTB"/>
<dbReference type="HGNC" id="HGNC:23567">
    <property type="gene designation" value="SGTB"/>
</dbReference>
<dbReference type="HPA" id="ENSG00000197860">
    <property type="expression patterns" value="Tissue enhanced (brain)"/>
</dbReference>
<dbReference type="MIM" id="620526">
    <property type="type" value="gene"/>
</dbReference>
<dbReference type="neXtProt" id="NX_Q96EQ0"/>
<dbReference type="OpenTargets" id="ENSG00000197860"/>
<dbReference type="PharmGKB" id="PA134957805"/>
<dbReference type="VEuPathDB" id="HostDB:ENSG00000197860"/>
<dbReference type="eggNOG" id="KOG0553">
    <property type="taxonomic scope" value="Eukaryota"/>
</dbReference>
<dbReference type="GeneTree" id="ENSGT00940000158321"/>
<dbReference type="HOGENOM" id="CLU_044224_0_0_1"/>
<dbReference type="InParanoid" id="Q96EQ0"/>
<dbReference type="OMA" id="DMARNMM"/>
<dbReference type="OrthoDB" id="2335338at2759"/>
<dbReference type="PAN-GO" id="Q96EQ0">
    <property type="GO annotations" value="5 GO annotations based on evolutionary models"/>
</dbReference>
<dbReference type="PhylomeDB" id="Q96EQ0"/>
<dbReference type="TreeFam" id="TF313092"/>
<dbReference type="PathwayCommons" id="Q96EQ0"/>
<dbReference type="SignaLink" id="Q96EQ0"/>
<dbReference type="BioGRID-ORCS" id="54557">
    <property type="hits" value="4 hits in 1154 CRISPR screens"/>
</dbReference>
<dbReference type="ChiTaRS" id="SGTB">
    <property type="organism name" value="human"/>
</dbReference>
<dbReference type="GenomeRNAi" id="54557"/>
<dbReference type="Pharos" id="Q96EQ0">
    <property type="development level" value="Tbio"/>
</dbReference>
<dbReference type="PRO" id="PR:Q96EQ0"/>
<dbReference type="Proteomes" id="UP000005640">
    <property type="component" value="Chromosome 5"/>
</dbReference>
<dbReference type="RNAct" id="Q96EQ0">
    <property type="molecule type" value="protein"/>
</dbReference>
<dbReference type="Bgee" id="ENSG00000197860">
    <property type="expression patterns" value="Expressed in endothelial cell and 189 other cell types or tissues"/>
</dbReference>
<dbReference type="ExpressionAtlas" id="Q96EQ0">
    <property type="expression patterns" value="baseline and differential"/>
</dbReference>
<dbReference type="GO" id="GO:0016020">
    <property type="term" value="C:membrane"/>
    <property type="evidence" value="ECO:0000318"/>
    <property type="project" value="GO_Central"/>
</dbReference>
<dbReference type="GO" id="GO:0072380">
    <property type="term" value="C:TRC complex"/>
    <property type="evidence" value="ECO:0000318"/>
    <property type="project" value="GO_Central"/>
</dbReference>
<dbReference type="GO" id="GO:0030544">
    <property type="term" value="F:Hsp70 protein binding"/>
    <property type="evidence" value="ECO:0007669"/>
    <property type="project" value="Ensembl"/>
</dbReference>
<dbReference type="GO" id="GO:0042802">
    <property type="term" value="F:identical protein binding"/>
    <property type="evidence" value="ECO:0007669"/>
    <property type="project" value="Ensembl"/>
</dbReference>
<dbReference type="GO" id="GO:0060090">
    <property type="term" value="F:molecular adaptor activity"/>
    <property type="evidence" value="ECO:0000318"/>
    <property type="project" value="GO_Central"/>
</dbReference>
<dbReference type="GO" id="GO:0006620">
    <property type="term" value="P:post-translational protein targeting to endoplasmic reticulum membrane"/>
    <property type="evidence" value="ECO:0000318"/>
    <property type="project" value="GO_Central"/>
</dbReference>
<dbReference type="GO" id="GO:0051291">
    <property type="term" value="P:protein heterooligomerization"/>
    <property type="evidence" value="ECO:0007669"/>
    <property type="project" value="Ensembl"/>
</dbReference>
<dbReference type="GO" id="GO:0051260">
    <property type="term" value="P:protein homooligomerization"/>
    <property type="evidence" value="ECO:0007669"/>
    <property type="project" value="Ensembl"/>
</dbReference>
<dbReference type="FunFam" id="1.20.5.420:FF:000002">
    <property type="entry name" value="Small glutamine-rich tetratricopeptide repeat-containing protein alpha"/>
    <property type="match status" value="1"/>
</dbReference>
<dbReference type="FunFam" id="1.25.40.10:FF:000103">
    <property type="entry name" value="small glutamine-rich tetratricopeptide repeat-containing protein beta"/>
    <property type="match status" value="1"/>
</dbReference>
<dbReference type="Gene3D" id="1.20.5.420">
    <property type="entry name" value="Immunoglobulin FC, subunit C"/>
    <property type="match status" value="1"/>
</dbReference>
<dbReference type="Gene3D" id="1.25.40.10">
    <property type="entry name" value="Tetratricopeptide repeat domain"/>
    <property type="match status" value="1"/>
</dbReference>
<dbReference type="InterPro" id="IPR047150">
    <property type="entry name" value="SGT"/>
</dbReference>
<dbReference type="InterPro" id="IPR032374">
    <property type="entry name" value="SGTA_dimer"/>
</dbReference>
<dbReference type="InterPro" id="IPR011990">
    <property type="entry name" value="TPR-like_helical_dom_sf"/>
</dbReference>
<dbReference type="InterPro" id="IPR019734">
    <property type="entry name" value="TPR_rpt"/>
</dbReference>
<dbReference type="PANTHER" id="PTHR45831">
    <property type="entry name" value="LD24721P"/>
    <property type="match status" value="1"/>
</dbReference>
<dbReference type="PANTHER" id="PTHR45831:SF1">
    <property type="entry name" value="SMALL GLUTAMINE-RICH TETRATRICOPEPTIDE REPEAT-CONTAINING PROTEIN BETA"/>
    <property type="match status" value="1"/>
</dbReference>
<dbReference type="Pfam" id="PF16546">
    <property type="entry name" value="SGTA_dimer"/>
    <property type="match status" value="1"/>
</dbReference>
<dbReference type="Pfam" id="PF00515">
    <property type="entry name" value="TPR_1"/>
    <property type="match status" value="1"/>
</dbReference>
<dbReference type="Pfam" id="PF13414">
    <property type="entry name" value="TPR_11"/>
    <property type="match status" value="1"/>
</dbReference>
<dbReference type="SMART" id="SM00028">
    <property type="entry name" value="TPR"/>
    <property type="match status" value="3"/>
</dbReference>
<dbReference type="SUPFAM" id="SSF48452">
    <property type="entry name" value="TPR-like"/>
    <property type="match status" value="1"/>
</dbReference>
<dbReference type="PROSITE" id="PS50005">
    <property type="entry name" value="TPR"/>
    <property type="match status" value="3"/>
</dbReference>
<dbReference type="PROSITE" id="PS50293">
    <property type="entry name" value="TPR_REGION"/>
    <property type="match status" value="1"/>
</dbReference>
<sequence length="304" mass="33429">MSSIKHLVYAVIRFLREQSQMDTYTSDEQESLEVAIQCLETVFKISPEDTHLAVSQPLTEMFTSSFCKNDVLPLSNSVPEDVGKADQLKDEGNNHMKEENYAAAVDCYTQAIELDPNNAVYYCNRAAAQSKLGHYTDAIKDCEKAIAIDSKYSKAYGRMGLALTALNKFEEAVTSYQKALDLDPENDSYKSNLKIAEQKLREVSSPTGTGLSFDMASLINNPAFISMAASLMQNPQVQQLMSGMMTNAIGGPAAGVGGLTDLSSLIQAGQQFAQQIQQQNPELIEQLRNHIRSRSFSSSAEEHS</sequence>
<name>SGTB_HUMAN</name>
<keyword id="KW-0007">Acetylation</keyword>
<keyword id="KW-0143">Chaperone</keyword>
<keyword id="KW-0597">Phosphoprotein</keyword>
<keyword id="KW-1267">Proteomics identification</keyword>
<keyword id="KW-1185">Reference proteome</keyword>
<keyword id="KW-0677">Repeat</keyword>
<keyword id="KW-0802">TPR repeat</keyword>
<reference key="1">
    <citation type="submission" date="2001-04" db="EMBL/GenBank/DDBJ databases">
        <authorList>
            <person name="Tobaben S."/>
            <person name="Stahl B."/>
        </authorList>
    </citation>
    <scope>NUCLEOTIDE SEQUENCE [MRNA]</scope>
</reference>
<reference key="2">
    <citation type="journal article" date="2004" name="Nat. Genet.">
        <title>Complete sequencing and characterization of 21,243 full-length human cDNAs.</title>
        <authorList>
            <person name="Ota T."/>
            <person name="Suzuki Y."/>
            <person name="Nishikawa T."/>
            <person name="Otsuki T."/>
            <person name="Sugiyama T."/>
            <person name="Irie R."/>
            <person name="Wakamatsu A."/>
            <person name="Hayashi K."/>
            <person name="Sato H."/>
            <person name="Nagai K."/>
            <person name="Kimura K."/>
            <person name="Makita H."/>
            <person name="Sekine M."/>
            <person name="Obayashi M."/>
            <person name="Nishi T."/>
            <person name="Shibahara T."/>
            <person name="Tanaka T."/>
            <person name="Ishii S."/>
            <person name="Yamamoto J."/>
            <person name="Saito K."/>
            <person name="Kawai Y."/>
            <person name="Isono Y."/>
            <person name="Nakamura Y."/>
            <person name="Nagahari K."/>
            <person name="Murakami K."/>
            <person name="Yasuda T."/>
            <person name="Iwayanagi T."/>
            <person name="Wagatsuma M."/>
            <person name="Shiratori A."/>
            <person name="Sudo H."/>
            <person name="Hosoiri T."/>
            <person name="Kaku Y."/>
            <person name="Kodaira H."/>
            <person name="Kondo H."/>
            <person name="Sugawara M."/>
            <person name="Takahashi M."/>
            <person name="Kanda K."/>
            <person name="Yokoi T."/>
            <person name="Furuya T."/>
            <person name="Kikkawa E."/>
            <person name="Omura Y."/>
            <person name="Abe K."/>
            <person name="Kamihara K."/>
            <person name="Katsuta N."/>
            <person name="Sato K."/>
            <person name="Tanikawa M."/>
            <person name="Yamazaki M."/>
            <person name="Ninomiya K."/>
            <person name="Ishibashi T."/>
            <person name="Yamashita H."/>
            <person name="Murakawa K."/>
            <person name="Fujimori K."/>
            <person name="Tanai H."/>
            <person name="Kimata M."/>
            <person name="Watanabe M."/>
            <person name="Hiraoka S."/>
            <person name="Chiba Y."/>
            <person name="Ishida S."/>
            <person name="Ono Y."/>
            <person name="Takiguchi S."/>
            <person name="Watanabe S."/>
            <person name="Yosida M."/>
            <person name="Hotuta T."/>
            <person name="Kusano J."/>
            <person name="Kanehori K."/>
            <person name="Takahashi-Fujii A."/>
            <person name="Hara H."/>
            <person name="Tanase T.-O."/>
            <person name="Nomura Y."/>
            <person name="Togiya S."/>
            <person name="Komai F."/>
            <person name="Hara R."/>
            <person name="Takeuchi K."/>
            <person name="Arita M."/>
            <person name="Imose N."/>
            <person name="Musashino K."/>
            <person name="Yuuki H."/>
            <person name="Oshima A."/>
            <person name="Sasaki N."/>
            <person name="Aotsuka S."/>
            <person name="Yoshikawa Y."/>
            <person name="Matsunawa H."/>
            <person name="Ichihara T."/>
            <person name="Shiohata N."/>
            <person name="Sano S."/>
            <person name="Moriya S."/>
            <person name="Momiyama H."/>
            <person name="Satoh N."/>
            <person name="Takami S."/>
            <person name="Terashima Y."/>
            <person name="Suzuki O."/>
            <person name="Nakagawa S."/>
            <person name="Senoh A."/>
            <person name="Mizoguchi H."/>
            <person name="Goto Y."/>
            <person name="Shimizu F."/>
            <person name="Wakebe H."/>
            <person name="Hishigaki H."/>
            <person name="Watanabe T."/>
            <person name="Sugiyama A."/>
            <person name="Takemoto M."/>
            <person name="Kawakami B."/>
            <person name="Yamazaki M."/>
            <person name="Watanabe K."/>
            <person name="Kumagai A."/>
            <person name="Itakura S."/>
            <person name="Fukuzumi Y."/>
            <person name="Fujimori Y."/>
            <person name="Komiyama M."/>
            <person name="Tashiro H."/>
            <person name="Tanigami A."/>
            <person name="Fujiwara T."/>
            <person name="Ono T."/>
            <person name="Yamada K."/>
            <person name="Fujii Y."/>
            <person name="Ozaki K."/>
            <person name="Hirao M."/>
            <person name="Ohmori Y."/>
            <person name="Kawabata A."/>
            <person name="Hikiji T."/>
            <person name="Kobatake N."/>
            <person name="Inagaki H."/>
            <person name="Ikema Y."/>
            <person name="Okamoto S."/>
            <person name="Okitani R."/>
            <person name="Kawakami T."/>
            <person name="Noguchi S."/>
            <person name="Itoh T."/>
            <person name="Shigeta K."/>
            <person name="Senba T."/>
            <person name="Matsumura K."/>
            <person name="Nakajima Y."/>
            <person name="Mizuno T."/>
            <person name="Morinaga M."/>
            <person name="Sasaki M."/>
            <person name="Togashi T."/>
            <person name="Oyama M."/>
            <person name="Hata H."/>
            <person name="Watanabe M."/>
            <person name="Komatsu T."/>
            <person name="Mizushima-Sugano J."/>
            <person name="Satoh T."/>
            <person name="Shirai Y."/>
            <person name="Takahashi Y."/>
            <person name="Nakagawa K."/>
            <person name="Okumura K."/>
            <person name="Nagase T."/>
            <person name="Nomura N."/>
            <person name="Kikuchi H."/>
            <person name="Masuho Y."/>
            <person name="Yamashita R."/>
            <person name="Nakai K."/>
            <person name="Yada T."/>
            <person name="Nakamura Y."/>
            <person name="Ohara O."/>
            <person name="Isogai T."/>
            <person name="Sugano S."/>
        </authorList>
    </citation>
    <scope>NUCLEOTIDE SEQUENCE [LARGE SCALE MRNA]</scope>
</reference>
<reference key="3">
    <citation type="journal article" date="2004" name="Genome Res.">
        <title>The status, quality, and expansion of the NIH full-length cDNA project: the Mammalian Gene Collection (MGC).</title>
        <authorList>
            <consortium name="The MGC Project Team"/>
        </authorList>
    </citation>
    <scope>NUCLEOTIDE SEQUENCE [LARGE SCALE MRNA]</scope>
    <source>
        <tissue>Uterus</tissue>
    </source>
</reference>
<reference key="4">
    <citation type="journal article" date="2008" name="Proc. Natl. Acad. Sci. U.S.A.">
        <title>A quantitative atlas of mitotic phosphorylation.</title>
        <authorList>
            <person name="Dephoure N."/>
            <person name="Zhou C."/>
            <person name="Villen J."/>
            <person name="Beausoleil S.A."/>
            <person name="Bakalarski C.E."/>
            <person name="Elledge S.J."/>
            <person name="Gygi S.P."/>
        </authorList>
    </citation>
    <scope>PHOSPHORYLATION [LARGE SCALE ANALYSIS] AT SER-295 AND SER-297</scope>
    <scope>IDENTIFICATION BY MASS SPECTROMETRY [LARGE SCALE ANALYSIS]</scope>
    <source>
        <tissue>Cervix carcinoma</tissue>
    </source>
</reference>
<reference key="5">
    <citation type="journal article" date="2011" name="BMC Syst. Biol.">
        <title>Initial characterization of the human central proteome.</title>
        <authorList>
            <person name="Burkard T.R."/>
            <person name="Planyavsky M."/>
            <person name="Kaupe I."/>
            <person name="Breitwieser F.P."/>
            <person name="Buerckstuemmer T."/>
            <person name="Bennett K.L."/>
            <person name="Superti-Furga G."/>
            <person name="Colinge J."/>
        </authorList>
    </citation>
    <scope>IDENTIFICATION BY MASS SPECTROMETRY [LARGE SCALE ANALYSIS]</scope>
</reference>
<reference key="6">
    <citation type="journal article" date="2011" name="Sci. Signal.">
        <title>System-wide temporal characterization of the proteome and phosphoproteome of human embryonic stem cell differentiation.</title>
        <authorList>
            <person name="Rigbolt K.T."/>
            <person name="Prokhorova T.A."/>
            <person name="Akimov V."/>
            <person name="Henningsen J."/>
            <person name="Johansen P.T."/>
            <person name="Kratchmarova I."/>
            <person name="Kassem M."/>
            <person name="Mann M."/>
            <person name="Olsen J.V."/>
            <person name="Blagoev B."/>
        </authorList>
    </citation>
    <scope>PHOSPHORYLATION [LARGE SCALE ANALYSIS] AT SER-297</scope>
    <scope>IDENTIFICATION BY MASS SPECTROMETRY [LARGE SCALE ANALYSIS]</scope>
</reference>
<reference key="7">
    <citation type="journal article" date="2013" name="J. Proteome Res.">
        <title>Toward a comprehensive characterization of a human cancer cell phosphoproteome.</title>
        <authorList>
            <person name="Zhou H."/>
            <person name="Di Palma S."/>
            <person name="Preisinger C."/>
            <person name="Peng M."/>
            <person name="Polat A.N."/>
            <person name="Heck A.J."/>
            <person name="Mohammed S."/>
        </authorList>
    </citation>
    <scope>PHOSPHORYLATION [LARGE SCALE ANALYSIS] AT SER-297</scope>
    <scope>IDENTIFICATION BY MASS SPECTROMETRY [LARGE SCALE ANALYSIS]</scope>
    <source>
        <tissue>Cervix carcinoma</tissue>
        <tissue>Erythroleukemia</tissue>
    </source>
</reference>